<comment type="function">
    <text evidence="1">Vacuolar effluxer which mediate the efflux of amino acids resulting from autophagic degradation. The release of autophagic amino acids allows the maintenance of protein synthesis and viability during nitrogen starvation (By similarity).</text>
</comment>
<comment type="subcellular location">
    <subcellularLocation>
        <location evidence="1">Vacuole membrane</location>
        <topology evidence="1">Multi-pass membrane protein</topology>
    </subcellularLocation>
    <text evidence="1">Vacuole and punctate structures.</text>
</comment>
<comment type="similarity">
    <text evidence="4">Belongs to the ATG22 family.</text>
</comment>
<keyword id="KW-0029">Amino-acid transport</keyword>
<keyword id="KW-0072">Autophagy</keyword>
<keyword id="KW-0325">Glycoprotein</keyword>
<keyword id="KW-0472">Membrane</keyword>
<keyword id="KW-1185">Reference proteome</keyword>
<keyword id="KW-0812">Transmembrane</keyword>
<keyword id="KW-1133">Transmembrane helix</keyword>
<keyword id="KW-0813">Transport</keyword>
<keyword id="KW-0926">Vacuole</keyword>
<dbReference type="EMBL" id="DS027045">
    <property type="protein sequence ID" value="EAW14394.1"/>
    <property type="molecule type" value="Genomic_DNA"/>
</dbReference>
<dbReference type="RefSeq" id="XP_001275820.1">
    <property type="nucleotide sequence ID" value="XM_001275819.1"/>
</dbReference>
<dbReference type="STRING" id="344612.A1C7M3"/>
<dbReference type="GlyCosmos" id="A1C7M3">
    <property type="glycosylation" value="3 sites, No reported glycans"/>
</dbReference>
<dbReference type="EnsemblFungi" id="EAW14394">
    <property type="protein sequence ID" value="EAW14394"/>
    <property type="gene ID" value="ACLA_074310"/>
</dbReference>
<dbReference type="GeneID" id="4707740"/>
<dbReference type="KEGG" id="act:ACLA_074310"/>
<dbReference type="VEuPathDB" id="FungiDB:ACLA_074310"/>
<dbReference type="eggNOG" id="ENOG502QVD3">
    <property type="taxonomic scope" value="Eukaryota"/>
</dbReference>
<dbReference type="HOGENOM" id="CLU_017518_1_0_1"/>
<dbReference type="OMA" id="QPWEIFP"/>
<dbReference type="OrthoDB" id="192733at2759"/>
<dbReference type="Proteomes" id="UP000006701">
    <property type="component" value="Unassembled WGS sequence"/>
</dbReference>
<dbReference type="GO" id="GO:0005774">
    <property type="term" value="C:vacuolar membrane"/>
    <property type="evidence" value="ECO:0007669"/>
    <property type="project" value="UniProtKB-SubCell"/>
</dbReference>
<dbReference type="GO" id="GO:0032974">
    <property type="term" value="P:amino acid transmembrane export from vacuole"/>
    <property type="evidence" value="ECO:0007669"/>
    <property type="project" value="InterPro"/>
</dbReference>
<dbReference type="GO" id="GO:0006914">
    <property type="term" value="P:autophagy"/>
    <property type="evidence" value="ECO:0007669"/>
    <property type="project" value="UniProtKB-KW"/>
</dbReference>
<dbReference type="CDD" id="cd17483">
    <property type="entry name" value="MFS_Atg22_like"/>
    <property type="match status" value="1"/>
</dbReference>
<dbReference type="Gene3D" id="1.20.1250.20">
    <property type="entry name" value="MFS general substrate transporter like domains"/>
    <property type="match status" value="1"/>
</dbReference>
<dbReference type="InterPro" id="IPR044738">
    <property type="entry name" value="Atg22"/>
</dbReference>
<dbReference type="InterPro" id="IPR024671">
    <property type="entry name" value="Atg22-like"/>
</dbReference>
<dbReference type="InterPro" id="IPR050495">
    <property type="entry name" value="ATG22/LtaA_families"/>
</dbReference>
<dbReference type="InterPro" id="IPR036259">
    <property type="entry name" value="MFS_trans_sf"/>
</dbReference>
<dbReference type="PANTHER" id="PTHR23519">
    <property type="entry name" value="AUTOPHAGY-RELATED PROTEIN 22"/>
    <property type="match status" value="1"/>
</dbReference>
<dbReference type="PANTHER" id="PTHR23519:SF3">
    <property type="entry name" value="AUTOPHAGY-RELATED PROTEIN 22-2"/>
    <property type="match status" value="1"/>
</dbReference>
<dbReference type="Pfam" id="PF11700">
    <property type="entry name" value="ATG22"/>
    <property type="match status" value="1"/>
</dbReference>
<dbReference type="SUPFAM" id="SSF103473">
    <property type="entry name" value="MFS general substrate transporter"/>
    <property type="match status" value="1"/>
</dbReference>
<gene>
    <name type="primary">atg22-1</name>
    <name type="ORF">ACLA_074310</name>
</gene>
<accession>A1C7M3</accession>
<feature type="chain" id="PRO_0000318014" description="Autophagy-related protein 22-1">
    <location>
        <begin position="1"/>
        <end position="610"/>
    </location>
</feature>
<feature type="transmembrane region" description="Helical" evidence="2">
    <location>
        <begin position="41"/>
        <end position="61"/>
    </location>
</feature>
<feature type="transmembrane region" description="Helical" evidence="2">
    <location>
        <begin position="120"/>
        <end position="140"/>
    </location>
</feature>
<feature type="transmembrane region" description="Helical" evidence="2">
    <location>
        <begin position="153"/>
        <end position="173"/>
    </location>
</feature>
<feature type="transmembrane region" description="Helical" evidence="2">
    <location>
        <begin position="177"/>
        <end position="197"/>
    </location>
</feature>
<feature type="transmembrane region" description="Helical" evidence="2">
    <location>
        <begin position="277"/>
        <end position="297"/>
    </location>
</feature>
<feature type="transmembrane region" description="Helical" evidence="2">
    <location>
        <begin position="310"/>
        <end position="330"/>
    </location>
</feature>
<feature type="transmembrane region" description="Helical" evidence="2">
    <location>
        <begin position="379"/>
        <end position="399"/>
    </location>
</feature>
<feature type="transmembrane region" description="Helical" evidence="2">
    <location>
        <begin position="415"/>
        <end position="435"/>
    </location>
</feature>
<feature type="transmembrane region" description="Helical" evidence="2">
    <location>
        <begin position="450"/>
        <end position="470"/>
    </location>
</feature>
<feature type="transmembrane region" description="Helical" evidence="2">
    <location>
        <begin position="485"/>
        <end position="507"/>
    </location>
</feature>
<feature type="transmembrane region" description="Helical" evidence="2">
    <location>
        <begin position="527"/>
        <end position="547"/>
    </location>
</feature>
<feature type="transmembrane region" description="Helical" evidence="2">
    <location>
        <begin position="550"/>
        <end position="570"/>
    </location>
</feature>
<feature type="region of interest" description="Disordered" evidence="3">
    <location>
        <begin position="1"/>
        <end position="29"/>
    </location>
</feature>
<feature type="region of interest" description="Disordered" evidence="3">
    <location>
        <begin position="216"/>
        <end position="242"/>
    </location>
</feature>
<feature type="region of interest" description="Disordered" evidence="3">
    <location>
        <begin position="586"/>
        <end position="610"/>
    </location>
</feature>
<feature type="compositionally biased region" description="Polar residues" evidence="3">
    <location>
        <begin position="229"/>
        <end position="239"/>
    </location>
</feature>
<feature type="glycosylation site" description="N-linked (GlcNAc...) asparagine" evidence="2">
    <location>
        <position position="90"/>
    </location>
</feature>
<feature type="glycosylation site" description="N-linked (GlcNAc...) asparagine" evidence="2">
    <location>
        <position position="445"/>
    </location>
</feature>
<feature type="glycosylation site" description="N-linked (GlcNAc...) asparagine" evidence="2">
    <location>
        <position position="591"/>
    </location>
</feature>
<evidence type="ECO:0000250" key="1"/>
<evidence type="ECO:0000255" key="2"/>
<evidence type="ECO:0000256" key="3">
    <source>
        <dbReference type="SAM" id="MobiDB-lite"/>
    </source>
</evidence>
<evidence type="ECO:0000305" key="4"/>
<protein>
    <recommendedName>
        <fullName>Autophagy-related protein 22-1</fullName>
    </recommendedName>
</protein>
<reference key="1">
    <citation type="journal article" date="2008" name="PLoS Genet.">
        <title>Genomic islands in the pathogenic filamentous fungus Aspergillus fumigatus.</title>
        <authorList>
            <person name="Fedorova N.D."/>
            <person name="Khaldi N."/>
            <person name="Joardar V.S."/>
            <person name="Maiti R."/>
            <person name="Amedeo P."/>
            <person name="Anderson M.J."/>
            <person name="Crabtree J."/>
            <person name="Silva J.C."/>
            <person name="Badger J.H."/>
            <person name="Albarraq A."/>
            <person name="Angiuoli S."/>
            <person name="Bussey H."/>
            <person name="Bowyer P."/>
            <person name="Cotty P.J."/>
            <person name="Dyer P.S."/>
            <person name="Egan A."/>
            <person name="Galens K."/>
            <person name="Fraser-Liggett C.M."/>
            <person name="Haas B.J."/>
            <person name="Inman J.M."/>
            <person name="Kent R."/>
            <person name="Lemieux S."/>
            <person name="Malavazi I."/>
            <person name="Orvis J."/>
            <person name="Roemer T."/>
            <person name="Ronning C.M."/>
            <person name="Sundaram J.P."/>
            <person name="Sutton G."/>
            <person name="Turner G."/>
            <person name="Venter J.C."/>
            <person name="White O.R."/>
            <person name="Whitty B.R."/>
            <person name="Youngman P."/>
            <person name="Wolfe K.H."/>
            <person name="Goldman G.H."/>
            <person name="Wortman J.R."/>
            <person name="Jiang B."/>
            <person name="Denning D.W."/>
            <person name="Nierman W.C."/>
        </authorList>
    </citation>
    <scope>NUCLEOTIDE SEQUENCE [LARGE SCALE GENOMIC DNA]</scope>
    <source>
        <strain>ATCC 1007 / CBS 513.65 / DSM 816 / NCTC 3887 / NRRL 1 / QM 1276 / 107</strain>
    </source>
</reference>
<sequence length="610" mass="66051">MIFTSTPPAPPPADAQQRQPRYPGEDTTPTSRREIWGWYTYGIAAEVFAVCGVGSFLPLTLEQLARERGTLLSSHLPCVGPGSPSAAPGNGTTPAMLRRDGLGSDQCVVGLFGLQINTASFAMYTFSLAVLVQALTLISFSALADYEKNRKTLLLTFGLIGSVSSMLFVFISPRLYILGAILVVIGVTCLGSSFVVLNSFLPVLVANDPSIQTARKTEGEELPHLDSSGEYTRSGSFNRGDNRGFDDYVAPEHGLKPKTTDSTSPEMQLSTKISSKGVGLGYCAAVLVQVLSILLLFTLSKTSLPKISGTLPLRFVLLLVGIWWFSFTVVTRRWLRNRPGPPLDTSKGGARWRIWLRLVGFAWKSLWKTVKVAAKLREVVIFLIAWFLLSDAMATVSGTAILFARTELKMSTTAVGLLSITATLSGMTGAFLWPVVSRRLKLKSNHTIMLCIALFEIIPLYGMLAYIPLVKKWGVIGLQQPWEIFPLGIVHGLVSGGLSSYCRSFFGVLIPPGSEAAFYALYAATDKGSSFIGPAVVGVLIDATGQVRSGFFFIAVLIVLPIPLIWMVNAEKGRQEGLAMAEMLEKSHGENSSEFGHPSEEAEGLLARNP</sequence>
<name>AT221_ASPCL</name>
<proteinExistence type="inferred from homology"/>
<organism>
    <name type="scientific">Aspergillus clavatus (strain ATCC 1007 / CBS 513.65 / DSM 816 / NCTC 3887 / NRRL 1 / QM 1276 / 107)</name>
    <dbReference type="NCBI Taxonomy" id="344612"/>
    <lineage>
        <taxon>Eukaryota</taxon>
        <taxon>Fungi</taxon>
        <taxon>Dikarya</taxon>
        <taxon>Ascomycota</taxon>
        <taxon>Pezizomycotina</taxon>
        <taxon>Eurotiomycetes</taxon>
        <taxon>Eurotiomycetidae</taxon>
        <taxon>Eurotiales</taxon>
        <taxon>Aspergillaceae</taxon>
        <taxon>Aspergillus</taxon>
        <taxon>Aspergillus subgen. Fumigati</taxon>
    </lineage>
</organism>